<gene>
    <name type="primary">isiA</name>
    <name type="ordered locus">sll0247</name>
</gene>
<keyword id="KW-0002">3D-structure</keyword>
<keyword id="KW-0148">Chlorophyll</keyword>
<keyword id="KW-0157">Chromophore</keyword>
<keyword id="KW-0472">Membrane</keyword>
<keyword id="KW-0602">Photosynthesis</keyword>
<keyword id="KW-0603">Photosystem I</keyword>
<keyword id="KW-1185">Reference proteome</keyword>
<keyword id="KW-0346">Stress response</keyword>
<keyword id="KW-0793">Thylakoid</keyword>
<keyword id="KW-0812">Transmembrane</keyword>
<keyword id="KW-1133">Transmembrane helix</keyword>
<sequence length="342" mass="37221">MQTYGNDTVQYEWWAGNARFADQSGLFIAAHVAQAALTAFWAGAFTLFEISRFDPTQAMGDQGLILLPHLATLGWGVGDGGQIVDTYPYFVIGSIHLIASAVLGAGALFHTLRAPADLSTLKGQGKKFHFTWENPQQLGIILGHHLLFLGAGALLLAGKAMYWGGLYDATTQTVRLVSQPTLDPLVIYGYQTHFASISSLEDLVGGHIFVGFLLIGGGIWHILVPPLGWAKKVLLFSGEAILSYSLGGIALAGFVAAYFCAVNTLAYPPEFYGPPLAIKLGIFPYFADTVELPMHAHTSRAWLANAHFFLAFFFLQGHLWHALRALGFDFKRVEQAFDSLQT</sequence>
<evidence type="ECO:0000255" key="1"/>
<evidence type="ECO:0000269" key="2">
    <source>
    </source>
</evidence>
<evidence type="ECO:0000269" key="3">
    <source>
    </source>
</evidence>
<evidence type="ECO:0000269" key="4">
    <source>
    </source>
</evidence>
<evidence type="ECO:0000269" key="5">
    <source>
    </source>
</evidence>
<evidence type="ECO:0000269" key="6">
    <source>
    </source>
</evidence>
<evidence type="ECO:0000305" key="7"/>
<reference key="1">
    <citation type="submission" date="1993-12" db="EMBL/GenBank/DDBJ databases">
        <title>Sequence of isiS from Synechocystis PCC 6803.</title>
        <authorList>
            <person name="Ferreira F."/>
            <person name="Straus N.A."/>
        </authorList>
    </citation>
    <scope>NUCLEOTIDE SEQUENCE [GENOMIC DNA]</scope>
</reference>
<reference key="2">
    <citation type="journal article" date="1996" name="DNA Res.">
        <title>Sequence analysis of the genome of the unicellular cyanobacterium Synechocystis sp. strain PCC6803. II. Sequence determination of the entire genome and assignment of potential protein-coding regions.</title>
        <authorList>
            <person name="Kaneko T."/>
            <person name="Sato S."/>
            <person name="Kotani H."/>
            <person name="Tanaka A."/>
            <person name="Asamizu E."/>
            <person name="Nakamura Y."/>
            <person name="Miyajima N."/>
            <person name="Hirosawa M."/>
            <person name="Sugiura M."/>
            <person name="Sasamoto S."/>
            <person name="Kimura T."/>
            <person name="Hosouchi T."/>
            <person name="Matsuno A."/>
            <person name="Muraki A."/>
            <person name="Nakazaki N."/>
            <person name="Naruo K."/>
            <person name="Okumura S."/>
            <person name="Shimpo S."/>
            <person name="Takeuchi C."/>
            <person name="Wada T."/>
            <person name="Watanabe A."/>
            <person name="Yamada M."/>
            <person name="Yasuda M."/>
            <person name="Tabata S."/>
        </authorList>
    </citation>
    <scope>NUCLEOTIDE SEQUENCE [LARGE SCALE GENOMIC DNA]</scope>
    <source>
        <strain>ATCC 27184 / PCC 6803 / Kazusa</strain>
    </source>
</reference>
<reference key="3">
    <citation type="journal article" date="1998" name="FEMS Microbiol. Lett.">
        <title>Transcriptional analysis of the isiAB operon in salt-stressed cells of the cyanobacterium Synechocystis sp. PCC 6803.</title>
        <authorList>
            <person name="Vinnemeier J."/>
            <person name="Kunert A."/>
            <person name="Hagemann M."/>
        </authorList>
    </citation>
    <scope>INDUCTION BY HIGH SALT AND IRON-DEFICIENCY</scope>
</reference>
<reference key="4">
    <citation type="journal article" date="2001" name="Nature">
        <title>Iron deficiency induces the formation of an antenna ring around trimeric photosystem I in cyanobacteria.</title>
        <authorList>
            <person name="Bibby T.S."/>
            <person name="Nield J."/>
            <person name="Barber J."/>
        </authorList>
    </citation>
    <scope>FUNCTION</scope>
    <scope>STRUCTURAL ASSOCIATION WITH PHOTOSYSTEM I TRIMERS</scope>
    <scope>SUBUNIT</scope>
</reference>
<reference key="5">
    <citation type="journal article" date="2003" name="Biochim. Biophys. Acta">
        <title>Photosystem I trimers from Synechocystis PCC 6803 lacking the PsaF and PsaJ subunits bind an IsiA ring of 17 units.</title>
        <authorList>
            <person name="Kouril R."/>
            <person name="Yeremenko N."/>
            <person name="D'Haene S."/>
            <person name="Yakushevska A.E."/>
            <person name="Keegstra W."/>
            <person name="Matthijs H.C.P."/>
            <person name="Dekker J.P."/>
            <person name="Boekema E.J."/>
        </authorList>
    </citation>
    <scope>SUBCELLULAR LOCATION</scope>
    <scope>RING STRUCTURE IN THE ABSENCE OF PSAF AND PSAJ</scope>
    <scope>SUBUNIT</scope>
</reference>
<reference key="6">
    <citation type="journal article" date="2005" name="Biochemistry">
        <title>Aggregates of the chlorophyll-binding protein IsiA (CP43') dissipate energy in cyanobacteria.</title>
        <authorList>
            <person name="Ihalainen J.A."/>
            <person name="D'Haene S."/>
            <person name="Yeremenko N."/>
            <person name="van Roon H."/>
            <person name="Arteni A.A."/>
            <person name="Boekema E.J."/>
            <person name="van Grondelle R."/>
            <person name="Matthijs H.C.P."/>
            <person name="Dekker J.P."/>
        </authorList>
    </citation>
    <scope>SUBCELLULAR LOCATION</scope>
    <scope>PIGMENT-BINDING</scope>
    <scope>FUNCTION IN LIGHT PROTECTION</scope>
    <scope>COFACTOR</scope>
    <scope>SUBUNIT</scope>
</reference>
<reference key="7">
    <citation type="journal article" date="2005" name="Biochim. Biophys. Acta">
        <title>Supercomplexes of IsiA and photosystem I in a mutant lacking subunit PsaL.</title>
        <authorList>
            <person name="Kouril R."/>
            <person name="Yeremenko N."/>
            <person name="D'Haene S."/>
            <person name="Oostergetel G.T."/>
            <person name="Matthijs H.C.P."/>
            <person name="Dekker J.P."/>
            <person name="Boekema E.J."/>
        </authorList>
    </citation>
    <scope>RING STRUCTURE IN THE ABSENCE OF PSAL</scope>
    <scope>SUBUNIT</scope>
</reference>
<reference key="8">
    <citation type="journal article" date="2005" name="FEBS Lett.">
        <title>Structure and functional role of supercomplexes of IsiA and Photosystem I in cyanobacterial photosynthesis.</title>
        <authorList>
            <person name="Kouril R."/>
            <person name="Arteni A.A."/>
            <person name="Lax J."/>
            <person name="Yeremenko N."/>
            <person name="D'Haene S."/>
            <person name="Rogner M."/>
            <person name="Matthijs H.C."/>
            <person name="Dekker J.P."/>
            <person name="Boekema E.J."/>
        </authorList>
    </citation>
    <scope>REVIEW</scope>
</reference>
<name>ISIA_SYNY3</name>
<protein>
    <recommendedName>
        <fullName>Iron stress-induced chlorophyll-binding protein</fullName>
    </recommendedName>
    <alternativeName>
        <fullName>CP43'</fullName>
    </alternativeName>
</protein>
<comment type="function">
    <text evidence="2 5">Functions as an antenna for photosystem I (PSI) under iron-limiting conditions, when phycobilisomes disappear. In the (PSI)3(Isi3)18 complex most of the harvested energy is probably used by PSI; in other PSI-containing supercomplexes a large part of the energy will probably not be used for light harvesting, but rather is dissipated to protect the organism from light damage.</text>
</comment>
<comment type="cofactor">
    <cofactor evidence="5">
        <name>chlorophyll a</name>
        <dbReference type="ChEBI" id="CHEBI:58416"/>
    </cofactor>
    <text evidence="5">Binds 16 chlorophyll a molecules per subunit.</text>
</comment>
<comment type="cofactor">
    <cofactor evidence="5">
        <name>all-trans-beta-carotene</name>
        <dbReference type="ChEBI" id="CHEBI:17579"/>
    </cofactor>
    <text evidence="5">Binds 2 beta-carotene molecules per subunit.</text>
</comment>
<comment type="cofactor">
    <cofactor evidence="5">
        <name>echinenone</name>
        <dbReference type="ChEBI" id="CHEBI:4746"/>
    </cofactor>
    <text evidence="5">Binds 1 echinenone molecule per subunit.</text>
</comment>
<comment type="cofactor">
    <cofactor evidence="5">
        <name>all-trans-zeaxanthin</name>
        <dbReference type="ChEBI" id="CHEBI:27547"/>
    </cofactor>
    <text evidence="5">Binds 1 zeaxanthin molecule per subunit.</text>
</comment>
<comment type="subunit">
    <text evidence="2 3 4 5">Under iron-starvation forms a complex with PSI trimers, where the trimer is surrounded by a ring composed of 18 IsiA subunits. When the PSI subunits PsaF and PsaJ are missing the ring is composed of 17 IsiA subunits, indicating that each IsiA subunit has a different interaction with the trimer. This suggests that the size of the PSI complex determines the number of IsiA units in the surrounding ring. In the absence of PsaL has a tendency to form incomplete rings with PSI monomers, suggesting PsaL helps form the rings. Also forms other aggregates of varying sizes depending on the level of iron-deprivation.</text>
</comment>
<comment type="subcellular location">
    <subcellularLocation>
        <location evidence="3 5">Cellular thylakoid membrane</location>
        <topology evidence="3 5">Multi-pass membrane protein</topology>
    </subcellularLocation>
</comment>
<comment type="induction">
    <text evidence="6">By iron stress, salt stress and to a lesser extent by heat shock.</text>
</comment>
<comment type="similarity">
    <text evidence="7">Belongs to the PsbB/PsbC family. IsiA/Pcb subfamily.</text>
</comment>
<proteinExistence type="evidence at protein level"/>
<organism>
    <name type="scientific">Synechocystis sp. (strain ATCC 27184 / PCC 6803 / Kazusa)</name>
    <dbReference type="NCBI Taxonomy" id="1111708"/>
    <lineage>
        <taxon>Bacteria</taxon>
        <taxon>Bacillati</taxon>
        <taxon>Cyanobacteriota</taxon>
        <taxon>Cyanophyceae</taxon>
        <taxon>Synechococcales</taxon>
        <taxon>Merismopediaceae</taxon>
        <taxon>Synechocystis</taxon>
    </lineage>
</organism>
<feature type="chain" id="PRO_0000077562" description="Iron stress-induced chlorophyll-binding protein">
    <location>
        <begin position="1"/>
        <end position="342"/>
    </location>
</feature>
<feature type="transmembrane region" description="Helical" evidence="1">
    <location>
        <begin position="25"/>
        <end position="45"/>
    </location>
</feature>
<feature type="transmembrane region" description="Helical" evidence="1">
    <location>
        <begin position="89"/>
        <end position="109"/>
    </location>
</feature>
<feature type="transmembrane region" description="Helical" evidence="1">
    <location>
        <begin position="138"/>
        <end position="158"/>
    </location>
</feature>
<feature type="transmembrane region" description="Helical" evidence="1">
    <location>
        <begin position="208"/>
        <end position="228"/>
    </location>
</feature>
<feature type="transmembrane region" description="Helical" evidence="1">
    <location>
        <begin position="240"/>
        <end position="260"/>
    </location>
</feature>
<feature type="transmembrane region" description="Helical" evidence="1">
    <location>
        <begin position="303"/>
        <end position="323"/>
    </location>
</feature>
<feature type="sequence conflict" description="In Ref. 1; AAA27291." evidence="7" ref="1">
    <original>S</original>
    <variation>R</variation>
    <location>
        <position position="94"/>
    </location>
</feature>
<feature type="sequence conflict" description="In Ref. 1; AAA27291." evidence="7" ref="1">
    <original>EQAFDSLQT</original>
    <variation>NKRLIPCKPSH</variation>
    <location>
        <begin position="334"/>
        <end position="342"/>
    </location>
</feature>
<dbReference type="EMBL" id="L26530">
    <property type="protein sequence ID" value="AAA27291.1"/>
    <property type="molecule type" value="Genomic_DNA"/>
</dbReference>
<dbReference type="EMBL" id="BA000022">
    <property type="protein sequence ID" value="BAA17948.1"/>
    <property type="molecule type" value="Genomic_DNA"/>
</dbReference>
<dbReference type="PIR" id="S75086">
    <property type="entry name" value="S75086"/>
</dbReference>
<dbReference type="PDB" id="6NWA">
    <property type="method" value="EM"/>
    <property type="resolution" value="3.48 A"/>
    <property type="chains" value="W/X/Y/Z/g/h/n/o/p/q/r/s/t/u/v/w/x/y=1-342"/>
</dbReference>
<dbReference type="PDB" id="7UMH">
    <property type="method" value="EM"/>
    <property type="resolution" value="2.60 A"/>
    <property type="chains" value="W/X/Y/Z/g/h/n/o/p/q/r/s/t/u/v/w/x/y=1-342"/>
</dbReference>
<dbReference type="PDBsum" id="6NWA"/>
<dbReference type="PDBsum" id="7UMH"/>
<dbReference type="EMDB" id="EMD-0524"/>
<dbReference type="EMDB" id="EMD-26601"/>
<dbReference type="SMR" id="Q55274"/>
<dbReference type="IntAct" id="Q55274">
    <property type="interactions" value="11"/>
</dbReference>
<dbReference type="STRING" id="1148.gene:10498817"/>
<dbReference type="PaxDb" id="1148-1653031"/>
<dbReference type="EnsemblBacteria" id="BAA17948">
    <property type="protein sequence ID" value="BAA17948"/>
    <property type="gene ID" value="BAA17948"/>
</dbReference>
<dbReference type="KEGG" id="syn:sll0247"/>
<dbReference type="eggNOG" id="ENOG502Z92X">
    <property type="taxonomic scope" value="Bacteria"/>
</dbReference>
<dbReference type="InParanoid" id="Q55274"/>
<dbReference type="PhylomeDB" id="Q55274"/>
<dbReference type="Proteomes" id="UP000001425">
    <property type="component" value="Chromosome"/>
</dbReference>
<dbReference type="GO" id="GO:0009522">
    <property type="term" value="C:photosystem I"/>
    <property type="evidence" value="ECO:0000314"/>
    <property type="project" value="UniProtKB"/>
</dbReference>
<dbReference type="GO" id="GO:0005886">
    <property type="term" value="C:plasma membrane"/>
    <property type="evidence" value="ECO:0000314"/>
    <property type="project" value="UniProtKB"/>
</dbReference>
<dbReference type="GO" id="GO:0031676">
    <property type="term" value="C:plasma membrane-derived thylakoid membrane"/>
    <property type="evidence" value="ECO:0007669"/>
    <property type="project" value="UniProtKB-SubCell"/>
</dbReference>
<dbReference type="GO" id="GO:0016168">
    <property type="term" value="F:chlorophyll binding"/>
    <property type="evidence" value="ECO:0007669"/>
    <property type="project" value="UniProtKB-KW"/>
</dbReference>
<dbReference type="GO" id="GO:0010106">
    <property type="term" value="P:cellular response to iron ion starvation"/>
    <property type="evidence" value="ECO:0000314"/>
    <property type="project" value="UniProtKB"/>
</dbReference>
<dbReference type="GO" id="GO:0009767">
    <property type="term" value="P:photosynthetic electron transport chain"/>
    <property type="evidence" value="ECO:0007669"/>
    <property type="project" value="InterPro"/>
</dbReference>
<dbReference type="InterPro" id="IPR000932">
    <property type="entry name" value="PS_antenna-like"/>
</dbReference>
<dbReference type="InterPro" id="IPR036001">
    <property type="entry name" value="PS_II_antenna-like_sf"/>
</dbReference>
<dbReference type="NCBIfam" id="TIGR03041">
    <property type="entry name" value="PS_antenn_a_b"/>
    <property type="match status" value="1"/>
</dbReference>
<dbReference type="Pfam" id="PF00421">
    <property type="entry name" value="PSII"/>
    <property type="match status" value="1"/>
</dbReference>
<dbReference type="SUPFAM" id="SSF161077">
    <property type="entry name" value="Photosystem II antenna protein-like"/>
    <property type="match status" value="1"/>
</dbReference>
<accession>Q55274</accession>
<accession>P73884</accession>